<keyword id="KW-0150">Chloroplast</keyword>
<keyword id="KW-0275">Fatty acid biosynthesis</keyword>
<keyword id="KW-0276">Fatty acid metabolism</keyword>
<keyword id="KW-0408">Iron</keyword>
<keyword id="KW-0444">Lipid biosynthesis</keyword>
<keyword id="KW-0443">Lipid metabolism</keyword>
<keyword id="KW-0479">Metal-binding</keyword>
<keyword id="KW-0560">Oxidoreductase</keyword>
<keyword id="KW-0934">Plastid</keyword>
<keyword id="KW-0809">Transit peptide</keyword>
<accession>P29108</accession>
<reference key="1">
    <citation type="journal article" date="1992" name="Proc. Natl. Acad. Sci. U.S.A.">
        <title>Modification of Brassica seed oil by antisense expression of a stearoyl-acyl carrier protein desaturase gene.</title>
        <authorList>
            <person name="Knutzon D.S."/>
            <person name="Thompson G.A."/>
            <person name="Radke S.E."/>
            <person name="Johnson W.B."/>
            <person name="Knauf V.C."/>
            <person name="Kridel J.C."/>
        </authorList>
    </citation>
    <scope>NUCLEOTIDE SEQUENCE [MRNA]</scope>
    <source>
        <strain>cv. R500</strain>
    </source>
</reference>
<reference key="2">
    <citation type="journal article" date="1997" name="Plant J.">
        <title>Intra- and extracellular lipid composition and associated gene expression patterns during pollen development in Brassica napus.</title>
        <authorList>
            <person name="Piffanelli P."/>
            <person name="Ross J.H."/>
            <person name="Murphy D.J."/>
        </authorList>
    </citation>
    <scope>NUCLEOTIDE SEQUENCE [MRNA]</scope>
    <source>
        <strain>cv. Jet neuf</strain>
        <tissue>Leaf</tissue>
    </source>
</reference>
<dbReference type="EC" id="1.14.19.2" evidence="2"/>
<dbReference type="EMBL" id="X60978">
    <property type="protein sequence ID" value="CAA43294.1"/>
    <property type="molecule type" value="mRNA"/>
</dbReference>
<dbReference type="EMBL" id="X97325">
    <property type="protein sequence ID" value="CAA65990.1"/>
    <property type="molecule type" value="mRNA"/>
</dbReference>
<dbReference type="RefSeq" id="NP_001302885.1">
    <property type="nucleotide sequence ID" value="NM_001315956.1"/>
</dbReference>
<dbReference type="SMR" id="P29108"/>
<dbReference type="EnsemblPlants" id="CDX83464">
    <property type="protein sequence ID" value="CDX83464"/>
    <property type="gene ID" value="GSBRNA2T00139042001"/>
</dbReference>
<dbReference type="GeneID" id="106388339"/>
<dbReference type="Gramene" id="CDX83464">
    <property type="protein sequence ID" value="CDX83464"/>
    <property type="gene ID" value="GSBRNA2T00139042001"/>
</dbReference>
<dbReference type="KEGG" id="bna:106388339"/>
<dbReference type="OMA" id="THSMPPY"/>
<dbReference type="OrthoDB" id="1924153at2759"/>
<dbReference type="UniPathway" id="UPA00199"/>
<dbReference type="GO" id="GO:0009507">
    <property type="term" value="C:chloroplast"/>
    <property type="evidence" value="ECO:0007669"/>
    <property type="project" value="UniProtKB-SubCell"/>
</dbReference>
<dbReference type="GO" id="GO:0046872">
    <property type="term" value="F:metal ion binding"/>
    <property type="evidence" value="ECO:0007669"/>
    <property type="project" value="UniProtKB-KW"/>
</dbReference>
<dbReference type="GO" id="GO:0045300">
    <property type="term" value="F:stearoyl-[ACP] desaturase activity"/>
    <property type="evidence" value="ECO:0007669"/>
    <property type="project" value="UniProtKB-EC"/>
</dbReference>
<dbReference type="GO" id="GO:0006633">
    <property type="term" value="P:fatty acid biosynthetic process"/>
    <property type="evidence" value="ECO:0007669"/>
    <property type="project" value="UniProtKB-KW"/>
</dbReference>
<dbReference type="CDD" id="cd01050">
    <property type="entry name" value="Acyl_ACP_Desat"/>
    <property type="match status" value="1"/>
</dbReference>
<dbReference type="FunFam" id="1.10.620.20:FF:000002">
    <property type="entry name" value="Stearoyl-[acyl-carrier-protein] 9-desaturase, chloroplastic"/>
    <property type="match status" value="1"/>
</dbReference>
<dbReference type="Gene3D" id="1.10.620.20">
    <property type="entry name" value="Ribonucleotide Reductase, subunit A"/>
    <property type="match status" value="1"/>
</dbReference>
<dbReference type="InterPro" id="IPR005803">
    <property type="entry name" value="FADS-2_CS"/>
</dbReference>
<dbReference type="InterPro" id="IPR005067">
    <property type="entry name" value="Fatty_acid_desaturase-2"/>
</dbReference>
<dbReference type="InterPro" id="IPR009078">
    <property type="entry name" value="Ferritin-like_SF"/>
</dbReference>
<dbReference type="InterPro" id="IPR012348">
    <property type="entry name" value="RNR-like"/>
</dbReference>
<dbReference type="PANTHER" id="PTHR31155">
    <property type="entry name" value="ACYL- ACYL-CARRIER-PROTEIN DESATURASE-RELATED"/>
    <property type="match status" value="1"/>
</dbReference>
<dbReference type="PANTHER" id="PTHR31155:SF9">
    <property type="entry name" value="STEAROYL-[ACYL-CARRIER-PROTEIN] 9-DESATURASE 7, CHLOROPLASTIC"/>
    <property type="match status" value="1"/>
</dbReference>
<dbReference type="Pfam" id="PF03405">
    <property type="entry name" value="FA_desaturase_2"/>
    <property type="match status" value="1"/>
</dbReference>
<dbReference type="PIRSF" id="PIRSF000346">
    <property type="entry name" value="Dlt9_acylACP_des"/>
    <property type="match status" value="1"/>
</dbReference>
<dbReference type="SUPFAM" id="SSF47240">
    <property type="entry name" value="Ferritin-like"/>
    <property type="match status" value="1"/>
</dbReference>
<dbReference type="PROSITE" id="PS00574">
    <property type="entry name" value="FATTY_ACID_DESATUR_2"/>
    <property type="match status" value="1"/>
</dbReference>
<comment type="function">
    <text evidence="2">Converts stearoyl-ACP to oleoyl-ACP by introduction of a cis double bond between carbons 9 and 10 of the acyl chain.</text>
</comment>
<comment type="catalytic activity">
    <reaction evidence="2">
        <text>octadecanoyl-[ACP] + 2 reduced [2Fe-2S]-[ferredoxin] + O2 + 2 H(+) = (9Z)-octadecenoyl-[ACP] + 2 oxidized [2Fe-2S]-[ferredoxin] + 2 H2O</text>
        <dbReference type="Rhea" id="RHEA:11776"/>
        <dbReference type="Rhea" id="RHEA-COMP:9656"/>
        <dbReference type="Rhea" id="RHEA-COMP:9924"/>
        <dbReference type="Rhea" id="RHEA-COMP:10000"/>
        <dbReference type="Rhea" id="RHEA-COMP:10001"/>
        <dbReference type="ChEBI" id="CHEBI:15377"/>
        <dbReference type="ChEBI" id="CHEBI:15378"/>
        <dbReference type="ChEBI" id="CHEBI:15379"/>
        <dbReference type="ChEBI" id="CHEBI:33737"/>
        <dbReference type="ChEBI" id="CHEBI:33738"/>
        <dbReference type="ChEBI" id="CHEBI:78495"/>
        <dbReference type="ChEBI" id="CHEBI:78783"/>
        <dbReference type="EC" id="1.14.19.2"/>
    </reaction>
</comment>
<comment type="cofactor">
    <cofactor evidence="2">
        <name>Fe(2+)</name>
        <dbReference type="ChEBI" id="CHEBI:29033"/>
    </cofactor>
    <text evidence="2">Binds 2 Fe(2+) ions per subunit.</text>
</comment>
<comment type="pathway">
    <text>Lipid metabolism; fatty acid metabolism.</text>
</comment>
<comment type="subunit">
    <text>Homodimer.</text>
</comment>
<comment type="subcellular location">
    <subcellularLocation>
        <location>Plastid</location>
        <location>Chloroplast</location>
    </subcellularLocation>
    <subcellularLocation>
        <location>Plastid</location>
    </subcellularLocation>
    <text>In green tissue, found in chloroplasts. In non-photosynthetic tissue, found in plastids.</text>
</comment>
<comment type="similarity">
    <text evidence="3">Belongs to the fatty acid desaturase type 2 family.</text>
</comment>
<protein>
    <recommendedName>
        <fullName>Stearoyl-[acyl-carrier-protein] 9-desaturase, chloroplastic</fullName>
        <shortName>Stearoyl-ACP desaturase</shortName>
        <ecNumber evidence="2">1.14.19.2</ecNumber>
    </recommendedName>
    <alternativeName>
        <fullName>Acyl-[acyl-carrier-protein] desaturase</fullName>
    </alternativeName>
</protein>
<organism>
    <name type="scientific">Brassica napus</name>
    <name type="common">Rape</name>
    <dbReference type="NCBI Taxonomy" id="3708"/>
    <lineage>
        <taxon>Eukaryota</taxon>
        <taxon>Viridiplantae</taxon>
        <taxon>Streptophyta</taxon>
        <taxon>Embryophyta</taxon>
        <taxon>Tracheophyta</taxon>
        <taxon>Spermatophyta</taxon>
        <taxon>Magnoliopsida</taxon>
        <taxon>eudicotyledons</taxon>
        <taxon>Gunneridae</taxon>
        <taxon>Pentapetalae</taxon>
        <taxon>rosids</taxon>
        <taxon>malvids</taxon>
        <taxon>Brassicales</taxon>
        <taxon>Brassicaceae</taxon>
        <taxon>Brassiceae</taxon>
        <taxon>Brassica</taxon>
    </lineage>
</organism>
<evidence type="ECO:0000250" key="1">
    <source>
        <dbReference type="UniProtKB" id="P22243"/>
    </source>
</evidence>
<evidence type="ECO:0000250" key="2">
    <source>
        <dbReference type="UniProtKB" id="P22337"/>
    </source>
</evidence>
<evidence type="ECO:0000305" key="3"/>
<sequence length="398" mass="45348">MALKLNPLASQPYNFPSSARPPISTFRSPKFLCLASSSPALSSKEVESLKKPFTPPKEVHVQVLHSMPPQKIEIFKSMEDWAEQNLLTQLKDVEKSWQPQDFLPDPASDGFEDQVRELRERARELPDDYFVVLVGDMITEEALPTYQTMLNTLDGVRDETGASPTSWAIWTRAWTAEENRHGDLLNKYLYLSGRVDMRQIEKTIQYLIGSGMDPRTENNPYLGFIYTSFQERATFISHGNTARQAKEHGDLKLAQICGTIAADEKRHETAYTKIVEKLFEIDPDGTVMAFADMMRKKISMPAHLMYDGRDESLFDNFSSVAQRLGVYTAKDYADILEFLVGRWKIESLTGLSGEGNKAQEYLCGLTPRIRRLDERAQARAKKGPKVPFSWIHDREVQL</sequence>
<proteinExistence type="evidence at transcript level"/>
<name>STAD_BRANA</name>
<feature type="transit peptide" description="Chloroplast" evidence="1">
    <location>
        <begin position="1"/>
        <end position="34"/>
    </location>
</feature>
<feature type="chain" id="PRO_0000007127" description="Stearoyl-[acyl-carrier-protein] 9-desaturase, chloroplastic">
    <location>
        <begin position="35"/>
        <end position="398"/>
    </location>
</feature>
<feature type="binding site" evidence="2">
    <location>
        <position position="140"/>
    </location>
    <ligand>
        <name>Fe cation</name>
        <dbReference type="ChEBI" id="CHEBI:24875"/>
        <label>1</label>
    </ligand>
</feature>
<feature type="binding site" evidence="2">
    <location>
        <position position="178"/>
    </location>
    <ligand>
        <name>Fe cation</name>
        <dbReference type="ChEBI" id="CHEBI:24875"/>
        <label>1</label>
    </ligand>
</feature>
<feature type="binding site" evidence="2">
    <location>
        <position position="178"/>
    </location>
    <ligand>
        <name>Fe cation</name>
        <dbReference type="ChEBI" id="CHEBI:24875"/>
        <label>2</label>
    </ligand>
</feature>
<feature type="binding site" evidence="2">
    <location>
        <position position="181"/>
    </location>
    <ligand>
        <name>Fe cation</name>
        <dbReference type="ChEBI" id="CHEBI:24875"/>
        <label>1</label>
    </ligand>
</feature>
<feature type="binding site" evidence="2">
    <location>
        <position position="231"/>
    </location>
    <ligand>
        <name>Fe cation</name>
        <dbReference type="ChEBI" id="CHEBI:24875"/>
        <label>2</label>
    </ligand>
</feature>
<feature type="binding site" evidence="2">
    <location>
        <position position="264"/>
    </location>
    <ligand>
        <name>Fe cation</name>
        <dbReference type="ChEBI" id="CHEBI:24875"/>
        <label>1</label>
    </ligand>
</feature>
<feature type="binding site" evidence="2">
    <location>
        <position position="264"/>
    </location>
    <ligand>
        <name>Fe cation</name>
        <dbReference type="ChEBI" id="CHEBI:24875"/>
        <label>2</label>
    </ligand>
</feature>
<feature type="binding site" evidence="2">
    <location>
        <position position="267"/>
    </location>
    <ligand>
        <name>Fe cation</name>
        <dbReference type="ChEBI" id="CHEBI:24875"/>
        <label>2</label>
    </ligand>
</feature>